<sequence length="897" mass="104191">MGMATYAVVDLETTGNQLDFDDIIQIGITFVRNNQIIDTYHSMIRTNLEIPPFIQALTSIEENMLQQAPYFNQVAQEIYDKIKDCIFVAHNVDFDLNFIKKAFKDCNIQYRPKKVIDTLEIFKIAFPTDKSYQLSELAEAHGITLANAHRADEDAATTAKLMILAFEKFEKLPLDTLKQLYYLSKQLKYDLYDIFFEMVRQYDAKPLDKSYEKFEQIIYRKQVDFKKPTTNYNGSLKSLYSKAVDQLGLTYRPQQLYLAETILDQLMHSEKAMIEASLGSGKSLAYLLAALMYNIETGKHVMISTNTKLLQSQLLEKDIPAMNEALNFKINALLIKSKSDYISLGLISQILKDDTSNYEVNILKMQLLIWITETPSGDIQELNLKGGQKMYFDQKIETYVPARHDVHYYNFIKRNAQNIQIGITNHAHLIHSDVENSIYQLFDDCIVDEAHRLPDYALNQVTNELSYADIKYQLGLIGKNENEKLLKAIDQLEKQRILEKLDIAPIDIFGLKASMNEIHELNEQLFSTIFTIINDSDVYDDDIHRFHNVFTFETKDILKDLHAIIDKLNKTLEIFNGISHKTVKSLRKQLLYLKDKFKNIEQSLKAGHTSFISIKNLSQKSTIRLYVKDYAVKDVLTKQVLEKFKSLIFISGTLKFNHSFEAFKQLFNKDVHFNTFEVNTSLQSAKNTSVFIPSDVASYQYKNIDEYVASIVSYIIEYTTITSSKCLVLFTSYKMMHMVQDMLNELPEFEDYVVLTQQQNQNYKIVQQFNNFDKAILLGTSTFFEGFDFQANGIKCVMIAKLPFMNKHNAKYWLMDSEFTSTFKEYVLPDAVTRFRQGLGRLIRSENDRGIIVSFDDRLINSNYKNFFEQTLENYRQKKGDIQQFGKLLRQIQKKKK</sequence>
<protein>
    <recommendedName>
        <fullName evidence="1">3'-5' exonuclease DinG</fullName>
        <ecNumber evidence="1">3.1.-.-</ecNumber>
    </recommendedName>
</protein>
<feature type="chain" id="PRO_0000277595" description="3'-5' exonuclease DinG">
    <location>
        <begin position="1"/>
        <end position="897"/>
    </location>
</feature>
<feature type="domain" description="Exonuclease" evidence="1">
    <location>
        <begin position="8"/>
        <end position="161"/>
    </location>
</feature>
<feature type="domain" description="Helicase ATP-binding" evidence="1">
    <location>
        <begin position="241"/>
        <end position="496"/>
    </location>
</feature>
<feature type="domain" description="Helicase C-terminal" evidence="1">
    <location>
        <begin position="703"/>
        <end position="893"/>
    </location>
</feature>
<feature type="short sequence motif" description="DEAH box" evidence="1">
    <location>
        <begin position="448"/>
        <end position="451"/>
    </location>
</feature>
<feature type="binding site" evidence="1">
    <location>
        <begin position="276"/>
        <end position="283"/>
    </location>
    <ligand>
        <name>ATP</name>
        <dbReference type="ChEBI" id="CHEBI:30616"/>
    </ligand>
</feature>
<proteinExistence type="inferred from homology"/>
<reference key="1">
    <citation type="journal article" date="2004" name="Proc. Natl. Acad. Sci. U.S.A.">
        <title>Complete genomes of two clinical Staphylococcus aureus strains: evidence for the rapid evolution of virulence and drug resistance.</title>
        <authorList>
            <person name="Holden M.T.G."/>
            <person name="Feil E.J."/>
            <person name="Lindsay J.A."/>
            <person name="Peacock S.J."/>
            <person name="Day N.P.J."/>
            <person name="Enright M.C."/>
            <person name="Foster T.J."/>
            <person name="Moore C.E."/>
            <person name="Hurst L."/>
            <person name="Atkin R."/>
            <person name="Barron A."/>
            <person name="Bason N."/>
            <person name="Bentley S.D."/>
            <person name="Chillingworth C."/>
            <person name="Chillingworth T."/>
            <person name="Churcher C."/>
            <person name="Clark L."/>
            <person name="Corton C."/>
            <person name="Cronin A."/>
            <person name="Doggett J."/>
            <person name="Dowd L."/>
            <person name="Feltwell T."/>
            <person name="Hance Z."/>
            <person name="Harris B."/>
            <person name="Hauser H."/>
            <person name="Holroyd S."/>
            <person name="Jagels K."/>
            <person name="James K.D."/>
            <person name="Lennard N."/>
            <person name="Line A."/>
            <person name="Mayes R."/>
            <person name="Moule S."/>
            <person name="Mungall K."/>
            <person name="Ormond D."/>
            <person name="Quail M.A."/>
            <person name="Rabbinowitsch E."/>
            <person name="Rutherford K.M."/>
            <person name="Sanders M."/>
            <person name="Sharp S."/>
            <person name="Simmonds M."/>
            <person name="Stevens K."/>
            <person name="Whitehead S."/>
            <person name="Barrell B.G."/>
            <person name="Spratt B.G."/>
            <person name="Parkhill J."/>
        </authorList>
    </citation>
    <scope>NUCLEOTIDE SEQUENCE [LARGE SCALE GENOMIC DNA]</scope>
    <source>
        <strain>MSSA476</strain>
    </source>
</reference>
<dbReference type="EC" id="3.1.-.-" evidence="1"/>
<dbReference type="EMBL" id="BX571857">
    <property type="protein sequence ID" value="CAG43174.1"/>
    <property type="molecule type" value="Genomic_DNA"/>
</dbReference>
<dbReference type="RefSeq" id="WP_000525081.1">
    <property type="nucleotide sequence ID" value="NC_002953.3"/>
</dbReference>
<dbReference type="SMR" id="Q6G9A7"/>
<dbReference type="KEGG" id="sas:SAS1398"/>
<dbReference type="HOGENOM" id="CLU_012117_1_1_9"/>
<dbReference type="GO" id="GO:0005829">
    <property type="term" value="C:cytosol"/>
    <property type="evidence" value="ECO:0007669"/>
    <property type="project" value="TreeGrafter"/>
</dbReference>
<dbReference type="GO" id="GO:0008408">
    <property type="term" value="F:3'-5' exonuclease activity"/>
    <property type="evidence" value="ECO:0007669"/>
    <property type="project" value="UniProtKB-UniRule"/>
</dbReference>
<dbReference type="GO" id="GO:0005524">
    <property type="term" value="F:ATP binding"/>
    <property type="evidence" value="ECO:0007669"/>
    <property type="project" value="UniProtKB-UniRule"/>
</dbReference>
<dbReference type="GO" id="GO:0003677">
    <property type="term" value="F:DNA binding"/>
    <property type="evidence" value="ECO:0007669"/>
    <property type="project" value="InterPro"/>
</dbReference>
<dbReference type="GO" id="GO:0003887">
    <property type="term" value="F:DNA-directed DNA polymerase activity"/>
    <property type="evidence" value="ECO:0007669"/>
    <property type="project" value="InterPro"/>
</dbReference>
<dbReference type="GO" id="GO:0004386">
    <property type="term" value="F:helicase activity"/>
    <property type="evidence" value="ECO:0007669"/>
    <property type="project" value="InterPro"/>
</dbReference>
<dbReference type="GO" id="GO:0016818">
    <property type="term" value="F:hydrolase activity, acting on acid anhydrides, in phosphorus-containing anhydrides"/>
    <property type="evidence" value="ECO:0007669"/>
    <property type="project" value="InterPro"/>
</dbReference>
<dbReference type="GO" id="GO:0045004">
    <property type="term" value="P:DNA replication proofreading"/>
    <property type="evidence" value="ECO:0007669"/>
    <property type="project" value="TreeGrafter"/>
</dbReference>
<dbReference type="CDD" id="cd06127">
    <property type="entry name" value="DEDDh"/>
    <property type="match status" value="1"/>
</dbReference>
<dbReference type="FunFam" id="3.30.420.10:FF:000045">
    <property type="entry name" value="3'-5' exonuclease DinG"/>
    <property type="match status" value="1"/>
</dbReference>
<dbReference type="FunFam" id="3.40.50.300:FF:001816">
    <property type="entry name" value="3'-5' exonuclease DinG"/>
    <property type="match status" value="1"/>
</dbReference>
<dbReference type="FunFam" id="3.40.50.300:FF:000437">
    <property type="entry name" value="ATP-dependent DNA helicase DinG"/>
    <property type="match status" value="1"/>
</dbReference>
<dbReference type="Gene3D" id="3.40.50.300">
    <property type="entry name" value="P-loop containing nucleotide triphosphate hydrolases"/>
    <property type="match status" value="2"/>
</dbReference>
<dbReference type="Gene3D" id="3.30.420.10">
    <property type="entry name" value="Ribonuclease H-like superfamily/Ribonuclease H"/>
    <property type="match status" value="1"/>
</dbReference>
<dbReference type="HAMAP" id="MF_02206">
    <property type="entry name" value="DinG_exonucl"/>
    <property type="match status" value="1"/>
</dbReference>
<dbReference type="InterPro" id="IPR006555">
    <property type="entry name" value="ATP-dep_Helicase_C"/>
</dbReference>
<dbReference type="InterPro" id="IPR006310">
    <property type="entry name" value="DinG"/>
</dbReference>
<dbReference type="InterPro" id="IPR006054">
    <property type="entry name" value="DnaQ"/>
</dbReference>
<dbReference type="InterPro" id="IPR013520">
    <property type="entry name" value="Exonuclease_RNaseT/DNA_pol3"/>
</dbReference>
<dbReference type="InterPro" id="IPR014013">
    <property type="entry name" value="Helic_SF1/SF2_ATP-bd_DinG/Rad3"/>
</dbReference>
<dbReference type="InterPro" id="IPR027417">
    <property type="entry name" value="P-loop_NTPase"/>
</dbReference>
<dbReference type="InterPro" id="IPR012337">
    <property type="entry name" value="RNaseH-like_sf"/>
</dbReference>
<dbReference type="InterPro" id="IPR036397">
    <property type="entry name" value="RNaseH_sf"/>
</dbReference>
<dbReference type="NCBIfam" id="TIGR01407">
    <property type="entry name" value="dinG_rel"/>
    <property type="match status" value="1"/>
</dbReference>
<dbReference type="NCBIfam" id="TIGR00573">
    <property type="entry name" value="dnaq"/>
    <property type="match status" value="1"/>
</dbReference>
<dbReference type="PANTHER" id="PTHR30231">
    <property type="entry name" value="DNA POLYMERASE III SUBUNIT EPSILON"/>
    <property type="match status" value="1"/>
</dbReference>
<dbReference type="PANTHER" id="PTHR30231:SF41">
    <property type="entry name" value="DNA POLYMERASE III SUBUNIT EPSILON"/>
    <property type="match status" value="1"/>
</dbReference>
<dbReference type="Pfam" id="PF13307">
    <property type="entry name" value="Helicase_C_2"/>
    <property type="match status" value="1"/>
</dbReference>
<dbReference type="Pfam" id="PF00929">
    <property type="entry name" value="RNase_T"/>
    <property type="match status" value="1"/>
</dbReference>
<dbReference type="SMART" id="SM00479">
    <property type="entry name" value="EXOIII"/>
    <property type="match status" value="1"/>
</dbReference>
<dbReference type="SMART" id="SM00491">
    <property type="entry name" value="HELICc2"/>
    <property type="match status" value="1"/>
</dbReference>
<dbReference type="SUPFAM" id="SSF52540">
    <property type="entry name" value="P-loop containing nucleoside triphosphate hydrolases"/>
    <property type="match status" value="1"/>
</dbReference>
<dbReference type="SUPFAM" id="SSF53098">
    <property type="entry name" value="Ribonuclease H-like"/>
    <property type="match status" value="1"/>
</dbReference>
<dbReference type="PROSITE" id="PS51193">
    <property type="entry name" value="HELICASE_ATP_BIND_2"/>
    <property type="match status" value="1"/>
</dbReference>
<dbReference type="PROSITE" id="PS51194">
    <property type="entry name" value="HELICASE_CTER"/>
    <property type="match status" value="1"/>
</dbReference>
<keyword id="KW-0067">ATP-binding</keyword>
<keyword id="KW-0269">Exonuclease</keyword>
<keyword id="KW-0378">Hydrolase</keyword>
<keyword id="KW-0540">Nuclease</keyword>
<keyword id="KW-0547">Nucleotide-binding</keyword>
<name>DING_STAAS</name>
<evidence type="ECO:0000255" key="1">
    <source>
        <dbReference type="HAMAP-Rule" id="MF_02206"/>
    </source>
</evidence>
<gene>
    <name evidence="1" type="primary">dinG</name>
    <name type="ordered locus">SAS1398</name>
</gene>
<comment type="function">
    <text evidence="1">3'-5' exonuclease.</text>
</comment>
<comment type="similarity">
    <text evidence="1">Belongs to the helicase family. DinG subfamily. Type 2 sub-subfamily.</text>
</comment>
<organism>
    <name type="scientific">Staphylococcus aureus (strain MSSA476)</name>
    <dbReference type="NCBI Taxonomy" id="282459"/>
    <lineage>
        <taxon>Bacteria</taxon>
        <taxon>Bacillati</taxon>
        <taxon>Bacillota</taxon>
        <taxon>Bacilli</taxon>
        <taxon>Bacillales</taxon>
        <taxon>Staphylococcaceae</taxon>
        <taxon>Staphylococcus</taxon>
    </lineage>
</organism>
<accession>Q6G9A7</accession>